<dbReference type="EMBL" id="AF287347">
    <property type="protein sequence ID" value="AAG00549.1"/>
    <property type="molecule type" value="mRNA"/>
</dbReference>
<dbReference type="Proteomes" id="UP000694384">
    <property type="component" value="Unplaced"/>
</dbReference>
<dbReference type="Proteomes" id="UP000694427">
    <property type="component" value="Unplaced"/>
</dbReference>
<dbReference type="Proteomes" id="UP000694700">
    <property type="component" value="Unplaced"/>
</dbReference>
<dbReference type="Proteomes" id="UP000694701">
    <property type="component" value="Unplaced"/>
</dbReference>
<dbReference type="Proteomes" id="UP001155660">
    <property type="component" value="Unplaced"/>
</dbReference>
<dbReference type="GO" id="GO:0005615">
    <property type="term" value="C:extracellular space"/>
    <property type="evidence" value="ECO:0007669"/>
    <property type="project" value="TreeGrafter"/>
</dbReference>
<dbReference type="GO" id="GO:0005184">
    <property type="term" value="F:neuropeptide hormone activity"/>
    <property type="evidence" value="ECO:0007669"/>
    <property type="project" value="TreeGrafter"/>
</dbReference>
<dbReference type="GO" id="GO:0031841">
    <property type="term" value="F:neuropeptide Y receptor binding"/>
    <property type="evidence" value="ECO:0007669"/>
    <property type="project" value="TreeGrafter"/>
</dbReference>
<dbReference type="GO" id="GO:0007631">
    <property type="term" value="P:feeding behavior"/>
    <property type="evidence" value="ECO:0007669"/>
    <property type="project" value="TreeGrafter"/>
</dbReference>
<dbReference type="GO" id="GO:0007218">
    <property type="term" value="P:neuropeptide signaling pathway"/>
    <property type="evidence" value="ECO:0007669"/>
    <property type="project" value="UniProtKB-KW"/>
</dbReference>
<dbReference type="CDD" id="cd00126">
    <property type="entry name" value="PAH"/>
    <property type="match status" value="1"/>
</dbReference>
<dbReference type="Gene3D" id="6.10.250.900">
    <property type="match status" value="1"/>
</dbReference>
<dbReference type="InterPro" id="IPR001955">
    <property type="entry name" value="Pancreatic_hormone-like"/>
</dbReference>
<dbReference type="InterPro" id="IPR020392">
    <property type="entry name" value="Pancreatic_hormone-like_CS"/>
</dbReference>
<dbReference type="PANTHER" id="PTHR10533">
    <property type="entry name" value="NEUROPEPTIDE Y/PANCREATIC HORMONE/PEPTIDE YY"/>
    <property type="match status" value="1"/>
</dbReference>
<dbReference type="PANTHER" id="PTHR10533:SF5">
    <property type="entry name" value="PRO-NEUROPEPTIDE Y"/>
    <property type="match status" value="1"/>
</dbReference>
<dbReference type="Pfam" id="PF00159">
    <property type="entry name" value="Hormone_3"/>
    <property type="match status" value="1"/>
</dbReference>
<dbReference type="PRINTS" id="PR00278">
    <property type="entry name" value="PANCHORMONE"/>
</dbReference>
<dbReference type="SMART" id="SM00309">
    <property type="entry name" value="PAH"/>
    <property type="match status" value="1"/>
</dbReference>
<dbReference type="PROSITE" id="PS00265">
    <property type="entry name" value="PANCREATIC_HORMONE_1"/>
    <property type="match status" value="1"/>
</dbReference>
<dbReference type="PROSITE" id="PS50276">
    <property type="entry name" value="PANCREATIC_HORMONE_2"/>
    <property type="match status" value="1"/>
</dbReference>
<evidence type="ECO:0000250" key="1"/>
<evidence type="ECO:0000305" key="2"/>
<feature type="signal peptide" evidence="1">
    <location>
        <begin position="1"/>
        <end position="28"/>
    </location>
</feature>
<feature type="peptide" id="PRO_0000025339" description="Neuropeptide Y">
    <location>
        <begin position="29"/>
        <end position="64"/>
    </location>
</feature>
<feature type="peptide" id="PRO_0000025340" description="C-flanking peptide of NPY">
    <location>
        <begin position="68"/>
        <end position="96"/>
    </location>
</feature>
<feature type="modified residue" description="Tyrosine amide" evidence="1">
    <location>
        <position position="64"/>
    </location>
</feature>
<comment type="function">
    <text>NPY is implicated in the control of feeding and in secretion of gonadotrophin-release hormone.</text>
</comment>
<comment type="subcellular location">
    <subcellularLocation>
        <location>Secreted</location>
    </subcellularLocation>
</comment>
<comment type="similarity">
    <text evidence="2">Belongs to the NPY family.</text>
</comment>
<accession>Q9DGK7</accession>
<protein>
    <recommendedName>
        <fullName>Pro-neuropeptide Y</fullName>
    </recommendedName>
    <component>
        <recommendedName>
            <fullName>Neuropeptide Y</fullName>
        </recommendedName>
        <alternativeName>
            <fullName>Neuropeptide tyrosine</fullName>
            <shortName>NPY</shortName>
        </alternativeName>
    </component>
    <component>
        <recommendedName>
            <fullName>C-flanking peptide of NPY</fullName>
            <shortName>CPON</shortName>
        </recommendedName>
    </component>
</protein>
<sequence length="96" mass="10987">MHPNMKMWIGWAACAFLLFACLGTLTEGYPTKPDNPGEDAPAEELAKYYSALRHYINLITRQRYGKRSSADTLISDLLIGETESHPQTRYEDHLVW</sequence>
<reference key="1">
    <citation type="submission" date="2000-07" db="EMBL/GenBank/DDBJ databases">
        <title>Daily rhythmic gene expression of neuropeptide Y in discrete brain of common carp, Cyprinus carpio, under the condition of self feeding.</title>
        <authorList>
            <person name="Yingwen L."/>
            <person name="Takeshi Y."/>
        </authorList>
    </citation>
    <scope>NUCLEOTIDE SEQUENCE [MRNA]</scope>
    <source>
        <tissue>Brain</tissue>
    </source>
</reference>
<organism>
    <name type="scientific">Cyprinus carpio</name>
    <name type="common">Common carp</name>
    <dbReference type="NCBI Taxonomy" id="7962"/>
    <lineage>
        <taxon>Eukaryota</taxon>
        <taxon>Metazoa</taxon>
        <taxon>Chordata</taxon>
        <taxon>Craniata</taxon>
        <taxon>Vertebrata</taxon>
        <taxon>Euteleostomi</taxon>
        <taxon>Actinopterygii</taxon>
        <taxon>Neopterygii</taxon>
        <taxon>Teleostei</taxon>
        <taxon>Ostariophysi</taxon>
        <taxon>Cypriniformes</taxon>
        <taxon>Cyprinidae</taxon>
        <taxon>Cyprininae</taxon>
        <taxon>Cyprinus</taxon>
    </lineage>
</organism>
<keyword id="KW-0027">Amidation</keyword>
<keyword id="KW-0165">Cleavage on pair of basic residues</keyword>
<keyword id="KW-0527">Neuropeptide</keyword>
<keyword id="KW-1185">Reference proteome</keyword>
<keyword id="KW-0964">Secreted</keyword>
<keyword id="KW-0732">Signal</keyword>
<proteinExistence type="inferred from homology"/>
<name>NPY_CYPCA</name>
<gene>
    <name type="primary">npy</name>
</gene>